<sequence length="141" mass="15830">MSNITIYHNPACGTSRNTLEMIRNSGTEPTIILYLENPPSRDELVKLIADMGISVRALLRKNVEPYEQLGLAEDKFTDDQLIDFMLQHPILINRPIVVTPLGTRLCRPSEVVLDILQDAQKGAFTKEDGEKVVDEAGKRLK</sequence>
<geneLocation type="plasmid">
    <name>R773</name>
</geneLocation>
<evidence type="ECO:0000255" key="1">
    <source>
        <dbReference type="PROSITE-ProRule" id="PRU01282"/>
    </source>
</evidence>
<evidence type="ECO:0000269" key="2">
    <source>
    </source>
</evidence>
<evidence type="ECO:0000269" key="3">
    <source>
    </source>
</evidence>
<evidence type="ECO:0000269" key="4">
    <source>
    </source>
</evidence>
<evidence type="ECO:0000269" key="5">
    <source>
    </source>
</evidence>
<evidence type="ECO:0000269" key="6">
    <source>
    </source>
</evidence>
<evidence type="ECO:0000269" key="7">
    <source>
    </source>
</evidence>
<evidence type="ECO:0000269" key="8">
    <source>
    </source>
</evidence>
<evidence type="ECO:0000269" key="9">
    <source>
    </source>
</evidence>
<evidence type="ECO:0000303" key="10">
    <source>
    </source>
</evidence>
<evidence type="ECO:0000303" key="11">
    <source>
    </source>
</evidence>
<evidence type="ECO:0000305" key="12"/>
<evidence type="ECO:0007744" key="13">
    <source>
        <dbReference type="PDB" id="1I9D"/>
    </source>
</evidence>
<evidence type="ECO:0007744" key="14">
    <source>
        <dbReference type="PDB" id="1J9B"/>
    </source>
</evidence>
<evidence type="ECO:0007744" key="15">
    <source>
        <dbReference type="PDB" id="1JZW"/>
    </source>
</evidence>
<evidence type="ECO:0007744" key="16">
    <source>
        <dbReference type="PDB" id="1S3C"/>
    </source>
</evidence>
<evidence type="ECO:0007744" key="17">
    <source>
        <dbReference type="PDB" id="1S3D"/>
    </source>
</evidence>
<evidence type="ECO:0007744" key="18">
    <source>
        <dbReference type="PDB" id="1SD8"/>
    </source>
</evidence>
<evidence type="ECO:0007744" key="19">
    <source>
        <dbReference type="PDB" id="1SD9"/>
    </source>
</evidence>
<evidence type="ECO:0007744" key="20">
    <source>
        <dbReference type="PDB" id="1SJZ"/>
    </source>
</evidence>
<evidence type="ECO:0007744" key="21">
    <source>
        <dbReference type="PDB" id="1SK0"/>
    </source>
</evidence>
<evidence type="ECO:0007744" key="22">
    <source>
        <dbReference type="PDB" id="1SK1"/>
    </source>
</evidence>
<evidence type="ECO:0007744" key="23">
    <source>
        <dbReference type="PDB" id="1SK2"/>
    </source>
</evidence>
<evidence type="ECO:0007829" key="24">
    <source>
        <dbReference type="PDB" id="1S3C"/>
    </source>
</evidence>
<gene>
    <name evidence="10" type="primary">arsC</name>
</gene>
<accession>P08692</accession>
<reference key="1">
    <citation type="journal article" date="1986" name="J. Biol. Chem.">
        <title>Nucleotide sequence of the structural genes for an anion pump. The plasmid-encoded arsenical resistance operon.</title>
        <authorList>
            <person name="Chen C.-M."/>
            <person name="Misra T.K."/>
            <person name="Silver S."/>
            <person name="Rosen B.P."/>
        </authorList>
    </citation>
    <scope>NUCLEOTIDE SEQUENCE [GENOMIC DNA]</scope>
    <scope>FUNCTION</scope>
    <source>
        <plasmid>R773</plasmid>
    </source>
</reference>
<reference key="2">
    <citation type="journal article" date="1991" name="Arch. Biochem. Biophys.">
        <title>Molecular analysis of an anion pump: purification of the ArsC protein.</title>
        <authorList>
            <person name="Rosen B.P."/>
            <person name="Weigel U."/>
            <person name="Monticello R.A."/>
            <person name="Edwards B.P.F."/>
        </authorList>
    </citation>
    <scope>PROTEIN SEQUENCE OF 5-13</scope>
    <scope>SUBUNIT</scope>
    <source>
        <plasmid>R773</plasmid>
    </source>
</reference>
<reference key="3">
    <citation type="journal article" date="1990" name="Res. Microbiol.">
        <title>The plasmid-encoded arsenical resistance pump: an anion-translocating ATPase.</title>
        <authorList>
            <person name="Rosen B.P."/>
        </authorList>
    </citation>
    <scope>REVIEW</scope>
</reference>
<reference key="4">
    <citation type="journal article" date="1994" name="Biochemistry">
        <title>Properties of the arsenate reductase of plasmid R773.</title>
        <authorList>
            <person name="Gladysheva T.B."/>
            <person name="Oden K.L."/>
            <person name="Rosen B.P."/>
        </authorList>
    </citation>
    <scope>FUNCTION</scope>
    <scope>CATALYTIC ACTIVITY</scope>
    <scope>BIOPHYSICOCHEMICAL PROPERTIES</scope>
    <source>
        <plasmid>R773</plasmid>
    </source>
</reference>
<reference key="5">
    <citation type="journal article" date="1995" name="Biochemistry">
        <title>Identification of an essential cysteinyl residue in the ArsC arsenate reductase of plasmid R773.</title>
        <authorList>
            <person name="Liu J."/>
            <person name="Gladysheva T.B."/>
            <person name="Lee L."/>
            <person name="Rosen B.P."/>
        </authorList>
    </citation>
    <scope>FUNCTION</scope>
    <scope>CATALYTIC ACTIVITY</scope>
    <scope>ACTIVITY REGULATION</scope>
    <scope>ACTIVE SITE</scope>
    <scope>MUTAGENESIS OF CYS-12 AND CYS-106</scope>
    <source>
        <plasmid>R773</plasmid>
    </source>
</reference>
<reference key="6">
    <citation type="journal article" date="1996" name="J. Biol. Chem.">
        <title>His-8 lowers the pKa of the essential Cys-12 residue of the ArsC arsenate reductase of plasmid R773.</title>
        <authorList>
            <person name="Gladysheva T."/>
            <person name="Liu J."/>
            <person name="Rosen B.P."/>
        </authorList>
    </citation>
    <scope>ACTIVITY REGULATION</scope>
    <scope>MUTAGENESIS OF HIS-8 AND HIS-88</scope>
    <source>
        <plasmid>R773</plasmid>
    </source>
</reference>
<reference key="7">
    <citation type="journal article" date="2003" name="FEMS Microbiol. Lett.">
        <title>Identification of a triad of arginine residues in the active site of the ArsC arsenate reductase of plasmid R773.</title>
        <authorList>
            <person name="Shi J."/>
            <person name="Mukhopadhyay R."/>
            <person name="Rosen B.P."/>
        </authorList>
    </citation>
    <scope>FUNCTION</scope>
    <scope>CATALYTIC ACTIVITY</scope>
    <scope>BIOPHYSICOCHEMICAL PROPERTIES</scope>
    <scope>MUTAGENESIS OF ARG-60; LYS-61; ARG-94; ARG-107; GLU-127; ASP-128 AND GLU-130</scope>
    <source>
        <plasmid>R773</plasmid>
    </source>
</reference>
<reference evidence="13 14 15" key="8">
    <citation type="journal article" date="2001" name="Structure">
        <title>Insights into the structure, solvation, and mechanism of ArsC arsenate reductase, a novel arsenic detoxification enzyme.</title>
        <authorList>
            <person name="Martin P."/>
            <person name="DeMel S."/>
            <person name="Shi J."/>
            <person name="Gladysheva T."/>
            <person name="Gatti D.L."/>
            <person name="Rosen B.P."/>
            <person name="Edwards B.F."/>
        </authorList>
    </citation>
    <scope>X-RAY CRYSTALLOGRAPHY (1.26 ANGSTROMS) OF APOENZYME AND IN COMPLEXES WITH ARSENATE AND ARSENITE</scope>
    <scope>ACTIVE SITE</scope>
    <source>
        <plasmid>R773</plasmid>
    </source>
</reference>
<reference evidence="16 17 18 19 20 21 22 23" key="9">
    <citation type="journal article" date="2004" name="Protein Sci.">
        <title>Arginine 60 in the ArsC arsenate reductase of E. coli plasmid R773 determines the chemical nature of the bound As(III) product.</title>
        <authorList>
            <person name="DeMel S."/>
            <person name="Shi J."/>
            <person name="Martin P."/>
            <person name="Rosen B.P."/>
            <person name="Edwards B.F."/>
        </authorList>
    </citation>
    <scope>X-RAY CRYSTALLOGRAPHY (1.25 ANGSTROMS) OF MUTANTS SER-12; ALA-60 AND LYS-60 IN APO FORM AND IN COMPLEXES WITH ARSENATE AND ARSENITE</scope>
    <scope>REACTION MECHANISM</scope>
    <scope>ACTIVE SITE</scope>
    <source>
        <plasmid>R773</plasmid>
    </source>
</reference>
<protein>
    <recommendedName>
        <fullName evidence="11">Arsenate reductase</fullName>
        <ecNumber evidence="3 7 8">1.20.4.1</ecNumber>
    </recommendedName>
    <alternativeName>
        <fullName>Arsenical pump modifier</fullName>
    </alternativeName>
</protein>
<comment type="function">
    <text evidence="3 6 7 8 12">Involved in resistance to arsenate (PubMed:3021763, PubMed:7577935, PubMed:8003492). Catalyzes the reduction of arsenate [As(V)] to arsenite [As(III)] (PubMed:14592722, PubMed:7577935, PubMed:8003492). The resulting arsenite is then extruded from the cell via the ArsAB transport system (Probable).</text>
</comment>
<comment type="catalytic activity">
    <reaction evidence="3 7 8">
        <text>[glutaredoxin]-dithiol + arsenate + glutathione + H(+) = glutathionyl-S-S-[glutaredoxin] + arsenite + H2O</text>
        <dbReference type="Rhea" id="RHEA:22016"/>
        <dbReference type="Rhea" id="RHEA-COMP:10729"/>
        <dbReference type="Rhea" id="RHEA-COMP:17668"/>
        <dbReference type="ChEBI" id="CHEBI:15377"/>
        <dbReference type="ChEBI" id="CHEBI:15378"/>
        <dbReference type="ChEBI" id="CHEBI:29242"/>
        <dbReference type="ChEBI" id="CHEBI:29950"/>
        <dbReference type="ChEBI" id="CHEBI:48597"/>
        <dbReference type="ChEBI" id="CHEBI:57925"/>
        <dbReference type="ChEBI" id="CHEBI:146199"/>
        <dbReference type="EC" id="1.20.4.1"/>
    </reaction>
    <physiologicalReaction direction="left-to-right" evidence="3 7 8">
        <dbReference type="Rhea" id="RHEA:22017"/>
    </physiologicalReaction>
</comment>
<comment type="activity regulation">
    <text evidence="7 9">Inhibited by the thiol reagents iodoacetate (IAA) and N-ethylmaleimide (NEM) (PubMed:7577935). Activity is rapidly inactivated by the histidine-modifying reagent diethylpyrocarbonate (DEPC) (PubMed:8969183).</text>
</comment>
<comment type="biophysicochemical properties">
    <kinetics>
        <KM evidence="8">8 mM for arsenate</KM>
        <KM evidence="3">15.2 mM for arsenate</KM>
        <KM evidence="3">32.9 nM for glutaredoxin Grx2</KM>
        <text evidence="3">kcat is 0.53 sec(-1) with arsenate as substrate. kcat is 0.218 sec(-1) with Grx2 as substrate.</text>
    </kinetics>
    <phDependence>
        <text evidence="8">Optimum pH is 6.3-6.8.</text>
    </phDependence>
</comment>
<comment type="subunit">
    <text evidence="5">Monomer in solution.</text>
</comment>
<comment type="similarity">
    <text evidence="12">Belongs to the ArsC family.</text>
</comment>
<dbReference type="EC" id="1.20.4.1" evidence="3 7 8"/>
<dbReference type="EMBL" id="J02591">
    <property type="protein sequence ID" value="AAA21096.1"/>
    <property type="molecule type" value="Genomic_DNA"/>
</dbReference>
<dbReference type="PIR" id="C25937">
    <property type="entry name" value="C25937"/>
</dbReference>
<dbReference type="RefSeq" id="WP_011117598.1">
    <property type="nucleotide sequence ID" value="NZ_VNXP01000024.1"/>
</dbReference>
<dbReference type="PDB" id="1I9D">
    <property type="method" value="X-ray"/>
    <property type="resolution" value="1.65 A"/>
    <property type="chains" value="A=1-141"/>
</dbReference>
<dbReference type="PDB" id="1J9B">
    <property type="method" value="X-ray"/>
    <property type="resolution" value="1.26 A"/>
    <property type="chains" value="A=1-141"/>
</dbReference>
<dbReference type="PDB" id="1JZW">
    <property type="method" value="X-ray"/>
    <property type="resolution" value="1.76 A"/>
    <property type="chains" value="A=1-140"/>
</dbReference>
<dbReference type="PDB" id="1S3C">
    <property type="method" value="X-ray"/>
    <property type="resolution" value="1.25 A"/>
    <property type="chains" value="A=1-141"/>
</dbReference>
<dbReference type="PDB" id="1S3D">
    <property type="method" value="X-ray"/>
    <property type="resolution" value="1.54 A"/>
    <property type="chains" value="A=3-140"/>
</dbReference>
<dbReference type="PDB" id="1SD8">
    <property type="method" value="X-ray"/>
    <property type="resolution" value="1.59 A"/>
    <property type="chains" value="A=1-141"/>
</dbReference>
<dbReference type="PDB" id="1SD9">
    <property type="method" value="X-ray"/>
    <property type="resolution" value="1.65 A"/>
    <property type="chains" value="A=1-141"/>
</dbReference>
<dbReference type="PDB" id="1SJZ">
    <property type="method" value="X-ray"/>
    <property type="resolution" value="1.80 A"/>
    <property type="chains" value="A=1-140"/>
</dbReference>
<dbReference type="PDB" id="1SK0">
    <property type="method" value="X-ray"/>
    <property type="resolution" value="1.80 A"/>
    <property type="chains" value="A=1-140"/>
</dbReference>
<dbReference type="PDB" id="1SK1">
    <property type="method" value="X-ray"/>
    <property type="resolution" value="1.55 A"/>
    <property type="chains" value="A=1-140"/>
</dbReference>
<dbReference type="PDB" id="1SK2">
    <property type="method" value="X-ray"/>
    <property type="resolution" value="1.54 A"/>
    <property type="chains" value="A=1-140"/>
</dbReference>
<dbReference type="PDBsum" id="1I9D"/>
<dbReference type="PDBsum" id="1J9B"/>
<dbReference type="PDBsum" id="1JZW"/>
<dbReference type="PDBsum" id="1S3C"/>
<dbReference type="PDBsum" id="1S3D"/>
<dbReference type="PDBsum" id="1SD8"/>
<dbReference type="PDBsum" id="1SD9"/>
<dbReference type="PDBsum" id="1SJZ"/>
<dbReference type="PDBsum" id="1SK0"/>
<dbReference type="PDBsum" id="1SK1"/>
<dbReference type="PDBsum" id="1SK2"/>
<dbReference type="SMR" id="P08692"/>
<dbReference type="STRING" id="585034.ECIAI1_3650"/>
<dbReference type="DrugBank" id="DB04456">
    <property type="generic name" value="Arsenous acid"/>
</dbReference>
<dbReference type="DrugBank" id="DB03352">
    <property type="generic name" value="S-Arsonocysteine"/>
</dbReference>
<dbReference type="DrugBank" id="DB03289">
    <property type="generic name" value="Thiarsa Dihydroxy Cysteine"/>
</dbReference>
<dbReference type="DrugBank" id="DB01808">
    <property type="generic name" value="Thiarsahydroxy-Cysteine"/>
</dbReference>
<dbReference type="eggNOG" id="COG1393">
    <property type="taxonomic scope" value="Bacteria"/>
</dbReference>
<dbReference type="BioCyc" id="MetaCyc:MONOMER-21672"/>
<dbReference type="EvolutionaryTrace" id="P08692"/>
<dbReference type="GO" id="GO:0008794">
    <property type="term" value="F:arsenate reductase (glutaredoxin) activity"/>
    <property type="evidence" value="ECO:0007669"/>
    <property type="project" value="UniProtKB-EC"/>
</dbReference>
<dbReference type="GO" id="GO:0046685">
    <property type="term" value="P:response to arsenic-containing substance"/>
    <property type="evidence" value="ECO:0007669"/>
    <property type="project" value="UniProtKB-KW"/>
</dbReference>
<dbReference type="CDD" id="cd03034">
    <property type="entry name" value="ArsC_ArsC"/>
    <property type="match status" value="1"/>
</dbReference>
<dbReference type="FunFam" id="3.40.30.10:FF:000048">
    <property type="entry name" value="Arsenate reductase"/>
    <property type="match status" value="1"/>
</dbReference>
<dbReference type="Gene3D" id="3.40.30.10">
    <property type="entry name" value="Glutaredoxin"/>
    <property type="match status" value="1"/>
</dbReference>
<dbReference type="InterPro" id="IPR006659">
    <property type="entry name" value="Arsenate_reductase"/>
</dbReference>
<dbReference type="InterPro" id="IPR006660">
    <property type="entry name" value="Arsenate_reductase-like"/>
</dbReference>
<dbReference type="InterPro" id="IPR036249">
    <property type="entry name" value="Thioredoxin-like_sf"/>
</dbReference>
<dbReference type="NCBIfam" id="TIGR00014">
    <property type="entry name" value="arsC"/>
    <property type="match status" value="1"/>
</dbReference>
<dbReference type="NCBIfam" id="NF007456">
    <property type="entry name" value="PRK10026.1"/>
    <property type="match status" value="1"/>
</dbReference>
<dbReference type="PANTHER" id="PTHR30041">
    <property type="entry name" value="ARSENATE REDUCTASE"/>
    <property type="match status" value="1"/>
</dbReference>
<dbReference type="PANTHER" id="PTHR30041:SF5">
    <property type="entry name" value="ARSENATE REDUCTASE-RELATED"/>
    <property type="match status" value="1"/>
</dbReference>
<dbReference type="Pfam" id="PF03960">
    <property type="entry name" value="ArsC"/>
    <property type="match status" value="1"/>
</dbReference>
<dbReference type="SUPFAM" id="SSF52833">
    <property type="entry name" value="Thioredoxin-like"/>
    <property type="match status" value="1"/>
</dbReference>
<dbReference type="PROSITE" id="PS51353">
    <property type="entry name" value="ARSC"/>
    <property type="match status" value="1"/>
</dbReference>
<name>ARSC1_ECOLX</name>
<organism>
    <name type="scientific">Escherichia coli</name>
    <dbReference type="NCBI Taxonomy" id="562"/>
    <lineage>
        <taxon>Bacteria</taxon>
        <taxon>Pseudomonadati</taxon>
        <taxon>Pseudomonadota</taxon>
        <taxon>Gammaproteobacteria</taxon>
        <taxon>Enterobacterales</taxon>
        <taxon>Enterobacteriaceae</taxon>
        <taxon>Escherichia</taxon>
    </lineage>
</organism>
<feature type="chain" id="PRO_0000162537" description="Arsenate reductase">
    <location>
        <begin position="1"/>
        <end position="141"/>
    </location>
</feature>
<feature type="active site" description="Nucleophile; cysteine thioarsenate intermediate" evidence="1 2 4 7">
    <location>
        <position position="12"/>
    </location>
</feature>
<feature type="site" description="Important for activity. Lowers pKa of the active site Cys" evidence="9">
    <location>
        <position position="8"/>
    </location>
</feature>
<feature type="site" description="Important for activity. Involved in arsenate binding and transition-state stabilization" evidence="2 3 4">
    <location>
        <position position="60"/>
    </location>
</feature>
<feature type="site" description="Important for activity. Involved in arsenate binding and transition-state stabilization" evidence="2 3 4">
    <location>
        <position position="94"/>
    </location>
</feature>
<feature type="site" description="Important for activity. Involved in arsenate binding and transition-state stabilization" evidence="2 3 4">
    <location>
        <position position="107"/>
    </location>
</feature>
<feature type="mutagenesis site" description="Loss of reductase activity. Mutant is sensitive to arsenate." evidence="9">
    <original>H</original>
    <variation>P</variation>
    <variation>G</variation>
    <variation>R</variation>
    <location>
        <position position="8"/>
    </location>
</feature>
<feature type="mutagenesis site" description="Mutant is sensitive to arsenate." evidence="9">
    <original>H</original>
    <variation>S</variation>
    <location>
        <position position="8"/>
    </location>
</feature>
<feature type="mutagenesis site" description="Mutant is sensitive to arsenate." evidence="7">
    <original>C</original>
    <variation>A</variation>
    <variation>G</variation>
    <location>
        <position position="12"/>
    </location>
</feature>
<feature type="mutagenesis site" description="Loss of reductase activity. Mutant is sensitive to arsenate." evidence="7">
    <original>C</original>
    <variation>S</variation>
    <location>
        <position position="12"/>
    </location>
</feature>
<feature type="mutagenesis site" description="50-fold decrease in catalytic efficiency with arsenate. Mutant is sensitive to arsenate." evidence="3">
    <original>R</original>
    <variation>A</variation>
    <location>
        <position position="60"/>
    </location>
</feature>
<feature type="mutagenesis site" description="70-fold decrease in catalytic efficiency with arsenate. Mutant is sensitive to arsenate." evidence="3">
    <original>R</original>
    <variation>E</variation>
    <location>
        <position position="60"/>
    </location>
</feature>
<feature type="mutagenesis site" description="22-fold decrease in catalytic efficiency with arsenate. Mutant shows low-level resistance to arsenate." evidence="3">
    <original>R</original>
    <variation>K</variation>
    <location>
        <position position="60"/>
    </location>
</feature>
<feature type="mutagenesis site" description="Mutant retains arsenate resistance." evidence="3">
    <original>K</original>
    <variation>A</variation>
    <variation>E</variation>
    <variation>R</variation>
    <location>
        <position position="61"/>
    </location>
</feature>
<feature type="mutagenesis site" description="No change in reductase activity. Mutant retains arsenate resistance." evidence="9">
    <original>H</original>
    <variation>R</variation>
    <variation>S</variation>
    <variation>V</variation>
    <variation>W</variation>
    <location>
        <position position="88"/>
    </location>
</feature>
<feature type="mutagenesis site" description="Loss of reductase activity. Mutant is sensitive to arsenate." evidence="3">
    <original>R</original>
    <variation>A</variation>
    <variation>E</variation>
    <variation>Y</variation>
    <location>
        <position position="94"/>
    </location>
</feature>
<feature type="mutagenesis site" description="Loss of reductase activity. Mutant exhibits slight resistance to arsenate." evidence="3">
    <original>R</original>
    <variation>K</variation>
    <location>
        <position position="94"/>
    </location>
</feature>
<feature type="mutagenesis site" description="Retains reductase activity. Mutant retains arsenate resistance." evidence="7">
    <original>C</original>
    <variation>G</variation>
    <variation>S</variation>
    <location>
        <position position="106"/>
    </location>
</feature>
<feature type="mutagenesis site" description="Mutant retains arsenate resistance." evidence="7">
    <original>C</original>
    <variation>V</variation>
    <location>
        <position position="106"/>
    </location>
</feature>
<feature type="mutagenesis site" description="Loss of reductase activity. Mutant is sensitive to arsenate." evidence="3">
    <original>R</original>
    <variation>A</variation>
    <variation>E</variation>
    <variation>Y</variation>
    <location>
        <position position="107"/>
    </location>
</feature>
<feature type="mutagenesis site" description="Mutant retains arsenate resistance." evidence="3">
    <original>R</original>
    <variation>K</variation>
    <location>
        <position position="107"/>
    </location>
</feature>
<feature type="mutagenesis site" description="6-fold decrease in catalytic efficiency with arsenate. Mutant is sensitive at high arsenate concentrations." evidence="3">
    <original>E</original>
    <variation>A</variation>
    <location>
        <position position="127"/>
    </location>
</feature>
<feature type="mutagenesis site" description="13-fold decrease in catalytic efficiency with arsenate. Mutant is sensitive at high arsenate concentrations." evidence="3">
    <original>E</original>
    <variation>D</variation>
    <location>
        <position position="127"/>
    </location>
</feature>
<feature type="mutagenesis site" description="17-fold decrease in catalytic efficiency with arsenate. Mutant is sensitive at high arsenate concentrations." evidence="3">
    <original>E</original>
    <variation>K</variation>
    <location>
        <position position="127"/>
    </location>
</feature>
<feature type="mutagenesis site" description="4-fold decrease in catalytic efficiency with arsenate. Mutant is relatively resistant to arsenate, but is more sensitive at higher concentrations." evidence="3">
    <original>D</original>
    <variation>A</variation>
    <location>
        <position position="128"/>
    </location>
</feature>
<feature type="mutagenesis site" description="7-fold decrease in catalytic efficiency with arsenate. Mutant is relatively resistant to arsenate, but is more sensitive at higher concentrations." evidence="3">
    <original>D</original>
    <variation>E</variation>
    <location>
        <position position="128"/>
    </location>
</feature>
<feature type="mutagenesis site" description="9-fold decrease in catalytic efficiency with arsenate. Mutant is relatively resistant to arsenate, but is more sensitive at higher concentrations." evidence="3">
    <original>D</original>
    <variation>K</variation>
    <location>
        <position position="128"/>
    </location>
</feature>
<feature type="mutagenesis site" description="3-fold decrease in catalytic efficiency with arsenate. Mutant is relatively resistant to arsenate, but is more sensitive at higher concentrations." evidence="3">
    <original>E</original>
    <variation>A</variation>
    <location>
        <position position="130"/>
    </location>
</feature>
<feature type="mutagenesis site" description="5-fold decrease in catalytic efficiency with arsenate. Mutant is relatively resistant to arsenate, but is more sensitive at higher concentrations." evidence="3">
    <original>E</original>
    <variation>D</variation>
    <location>
        <position position="130"/>
    </location>
</feature>
<feature type="mutagenesis site" description="5-fold decrease in catalytic efficiency with arsenate. Mutant is relatively resistant to arsenate, but is more sensitive at higher concentrations." evidence="3">
    <original>E</original>
    <variation>K</variation>
    <location>
        <position position="130"/>
    </location>
</feature>
<feature type="strand" evidence="24">
    <location>
        <begin position="5"/>
        <end position="7"/>
    </location>
</feature>
<feature type="helix" evidence="24">
    <location>
        <begin position="13"/>
        <end position="24"/>
    </location>
</feature>
<feature type="strand" evidence="24">
    <location>
        <begin position="30"/>
        <end position="32"/>
    </location>
</feature>
<feature type="turn" evidence="24">
    <location>
        <begin position="34"/>
        <end position="36"/>
    </location>
</feature>
<feature type="helix" evidence="24">
    <location>
        <begin position="41"/>
        <end position="51"/>
    </location>
</feature>
<feature type="helix" evidence="24">
    <location>
        <begin position="55"/>
        <end position="58"/>
    </location>
</feature>
<feature type="strand" evidence="24">
    <location>
        <begin position="61"/>
        <end position="63"/>
    </location>
</feature>
<feature type="helix" evidence="24">
    <location>
        <begin position="64"/>
        <end position="68"/>
    </location>
</feature>
<feature type="turn" evidence="24">
    <location>
        <begin position="69"/>
        <end position="72"/>
    </location>
</feature>
<feature type="helix" evidence="24">
    <location>
        <begin position="78"/>
        <end position="87"/>
    </location>
</feature>
<feature type="helix" evidence="24">
    <location>
        <begin position="89"/>
        <end position="91"/>
    </location>
</feature>
<feature type="strand" evidence="24">
    <location>
        <begin position="96"/>
        <end position="99"/>
    </location>
</feature>
<feature type="strand" evidence="24">
    <location>
        <begin position="102"/>
        <end position="105"/>
    </location>
</feature>
<feature type="helix" evidence="24">
    <location>
        <begin position="109"/>
        <end position="114"/>
    </location>
</feature>
<feature type="strand" evidence="24">
    <location>
        <begin position="131"/>
        <end position="133"/>
    </location>
</feature>
<keyword id="KW-0002">3D-structure</keyword>
<keyword id="KW-0059">Arsenical resistance</keyword>
<keyword id="KW-0903">Direct protein sequencing</keyword>
<keyword id="KW-0560">Oxidoreductase</keyword>
<keyword id="KW-0614">Plasmid</keyword>
<proteinExistence type="evidence at protein level"/>